<feature type="chain" id="PRO_0000286359" description="DNA topoisomerase 3">
    <location>
        <begin position="1"/>
        <end position="729"/>
    </location>
</feature>
<feature type="domain" description="Toprim" evidence="1">
    <location>
        <begin position="3"/>
        <end position="136"/>
    </location>
</feature>
<feature type="domain" description="Topo IA-type catalytic" evidence="2">
    <location>
        <begin position="153"/>
        <end position="594"/>
    </location>
</feature>
<feature type="region of interest" description="Interaction with DNA" evidence="1">
    <location>
        <begin position="187"/>
        <end position="192"/>
    </location>
</feature>
<feature type="region of interest" description="Disordered" evidence="3">
    <location>
        <begin position="686"/>
        <end position="718"/>
    </location>
</feature>
<feature type="compositionally biased region" description="Basic and acidic residues" evidence="3">
    <location>
        <begin position="686"/>
        <end position="713"/>
    </location>
</feature>
<feature type="active site" description="O-(5'-phospho-DNA)-tyrosine intermediate" evidence="2">
    <location>
        <position position="310"/>
    </location>
</feature>
<feature type="binding site" evidence="1">
    <location>
        <position position="9"/>
    </location>
    <ligand>
        <name>Mg(2+)</name>
        <dbReference type="ChEBI" id="CHEBI:18420"/>
        <note>catalytic</note>
    </ligand>
</feature>
<feature type="binding site" evidence="1">
    <location>
        <position position="105"/>
    </location>
    <ligand>
        <name>Mg(2+)</name>
        <dbReference type="ChEBI" id="CHEBI:18420"/>
        <note>catalytic</note>
    </ligand>
</feature>
<feature type="site" description="Interaction with DNA" evidence="1">
    <location>
        <position position="61"/>
    </location>
</feature>
<feature type="site" description="Interaction with DNA" evidence="1">
    <location>
        <position position="168"/>
    </location>
</feature>
<feature type="site" description="Interaction with DNA" evidence="1">
    <location>
        <position position="176"/>
    </location>
</feature>
<feature type="site" description="Interaction with DNA" evidence="1">
    <location>
        <position position="312"/>
    </location>
</feature>
<dbReference type="EC" id="5.6.2.1" evidence="1"/>
<dbReference type="EMBL" id="AE016879">
    <property type="protein sequence ID" value="AAP24405.1"/>
    <property type="molecule type" value="Genomic_DNA"/>
</dbReference>
<dbReference type="EMBL" id="AE017334">
    <property type="protein sequence ID" value="AAT29470.1"/>
    <property type="molecule type" value="Genomic_DNA"/>
</dbReference>
<dbReference type="EMBL" id="AE017225">
    <property type="protein sequence ID" value="AAT52692.1"/>
    <property type="molecule type" value="Genomic_DNA"/>
</dbReference>
<dbReference type="RefSeq" id="NP_842919.1">
    <property type="nucleotide sequence ID" value="NC_003997.3"/>
</dbReference>
<dbReference type="RefSeq" id="WP_001140209.1">
    <property type="nucleotide sequence ID" value="NZ_WXXJ01000026.1"/>
</dbReference>
<dbReference type="RefSeq" id="YP_026641.1">
    <property type="nucleotide sequence ID" value="NC_005945.1"/>
</dbReference>
<dbReference type="SMR" id="Q81Z97"/>
<dbReference type="IntAct" id="Q81Z97">
    <property type="interactions" value="2"/>
</dbReference>
<dbReference type="STRING" id="261594.GBAA_0375"/>
<dbReference type="DNASU" id="1084121"/>
<dbReference type="GeneID" id="45020434"/>
<dbReference type="KEGG" id="ban:BA_0375"/>
<dbReference type="KEGG" id="bar:GBAA_0375"/>
<dbReference type="KEGG" id="bat:BAS0361"/>
<dbReference type="PATRIC" id="fig|198094.11.peg.370"/>
<dbReference type="eggNOG" id="COG0550">
    <property type="taxonomic scope" value="Bacteria"/>
</dbReference>
<dbReference type="eggNOG" id="COG0551">
    <property type="taxonomic scope" value="Bacteria"/>
</dbReference>
<dbReference type="HOGENOM" id="CLU_002929_5_2_9"/>
<dbReference type="OMA" id="VIHNVYS"/>
<dbReference type="OrthoDB" id="9803554at2"/>
<dbReference type="Proteomes" id="UP000000427">
    <property type="component" value="Chromosome"/>
</dbReference>
<dbReference type="Proteomes" id="UP000000594">
    <property type="component" value="Chromosome"/>
</dbReference>
<dbReference type="GO" id="GO:0043597">
    <property type="term" value="C:cytoplasmic replication fork"/>
    <property type="evidence" value="ECO:0007669"/>
    <property type="project" value="TreeGrafter"/>
</dbReference>
<dbReference type="GO" id="GO:0003677">
    <property type="term" value="F:DNA binding"/>
    <property type="evidence" value="ECO:0007669"/>
    <property type="project" value="UniProtKB-KW"/>
</dbReference>
<dbReference type="GO" id="GO:0003917">
    <property type="term" value="F:DNA topoisomerase type I (single strand cut, ATP-independent) activity"/>
    <property type="evidence" value="ECO:0007669"/>
    <property type="project" value="UniProtKB-UniRule"/>
</dbReference>
<dbReference type="GO" id="GO:0000287">
    <property type="term" value="F:magnesium ion binding"/>
    <property type="evidence" value="ECO:0007669"/>
    <property type="project" value="UniProtKB-UniRule"/>
</dbReference>
<dbReference type="GO" id="GO:0006310">
    <property type="term" value="P:DNA recombination"/>
    <property type="evidence" value="ECO:0007669"/>
    <property type="project" value="TreeGrafter"/>
</dbReference>
<dbReference type="GO" id="GO:0006281">
    <property type="term" value="P:DNA repair"/>
    <property type="evidence" value="ECO:0007669"/>
    <property type="project" value="TreeGrafter"/>
</dbReference>
<dbReference type="GO" id="GO:0006265">
    <property type="term" value="P:DNA topological change"/>
    <property type="evidence" value="ECO:0007669"/>
    <property type="project" value="UniProtKB-UniRule"/>
</dbReference>
<dbReference type="CDD" id="cd00186">
    <property type="entry name" value="TOP1Ac"/>
    <property type="match status" value="1"/>
</dbReference>
<dbReference type="CDD" id="cd03362">
    <property type="entry name" value="TOPRIM_TopoIA_TopoIII"/>
    <property type="match status" value="1"/>
</dbReference>
<dbReference type="Gene3D" id="3.40.50.140">
    <property type="match status" value="1"/>
</dbReference>
<dbReference type="Gene3D" id="1.10.460.10">
    <property type="entry name" value="Topoisomerase I, domain 2"/>
    <property type="match status" value="1"/>
</dbReference>
<dbReference type="Gene3D" id="2.70.20.10">
    <property type="entry name" value="Topoisomerase I, domain 3"/>
    <property type="match status" value="1"/>
</dbReference>
<dbReference type="Gene3D" id="1.10.290.10">
    <property type="entry name" value="Topoisomerase I, domain 4"/>
    <property type="match status" value="1"/>
</dbReference>
<dbReference type="HAMAP" id="MF_00953">
    <property type="entry name" value="Topoisom_3_prok"/>
    <property type="match status" value="1"/>
</dbReference>
<dbReference type="InterPro" id="IPR000380">
    <property type="entry name" value="Topo_IA"/>
</dbReference>
<dbReference type="InterPro" id="IPR003601">
    <property type="entry name" value="Topo_IA_2"/>
</dbReference>
<dbReference type="InterPro" id="IPR023406">
    <property type="entry name" value="Topo_IA_AS"/>
</dbReference>
<dbReference type="InterPro" id="IPR013497">
    <property type="entry name" value="Topo_IA_cen"/>
</dbReference>
<dbReference type="InterPro" id="IPR013824">
    <property type="entry name" value="Topo_IA_cen_sub1"/>
</dbReference>
<dbReference type="InterPro" id="IPR013825">
    <property type="entry name" value="Topo_IA_cen_sub2"/>
</dbReference>
<dbReference type="InterPro" id="IPR013826">
    <property type="entry name" value="Topo_IA_cen_sub3"/>
</dbReference>
<dbReference type="InterPro" id="IPR023405">
    <property type="entry name" value="Topo_IA_core_domain"/>
</dbReference>
<dbReference type="InterPro" id="IPR003602">
    <property type="entry name" value="Topo_IA_DNA-bd_dom"/>
</dbReference>
<dbReference type="InterPro" id="IPR005738">
    <property type="entry name" value="TopoIII"/>
</dbReference>
<dbReference type="InterPro" id="IPR006171">
    <property type="entry name" value="TOPRIM_dom"/>
</dbReference>
<dbReference type="InterPro" id="IPR034144">
    <property type="entry name" value="TOPRIM_TopoIII"/>
</dbReference>
<dbReference type="NCBIfam" id="NF005829">
    <property type="entry name" value="PRK07726.1"/>
    <property type="match status" value="1"/>
</dbReference>
<dbReference type="NCBIfam" id="TIGR01056">
    <property type="entry name" value="topB"/>
    <property type="match status" value="1"/>
</dbReference>
<dbReference type="PANTHER" id="PTHR11390:SF21">
    <property type="entry name" value="DNA TOPOISOMERASE 3-ALPHA"/>
    <property type="match status" value="1"/>
</dbReference>
<dbReference type="PANTHER" id="PTHR11390">
    <property type="entry name" value="PROKARYOTIC DNA TOPOISOMERASE"/>
    <property type="match status" value="1"/>
</dbReference>
<dbReference type="Pfam" id="PF01131">
    <property type="entry name" value="Topoisom_bac"/>
    <property type="match status" value="1"/>
</dbReference>
<dbReference type="Pfam" id="PF01751">
    <property type="entry name" value="Toprim"/>
    <property type="match status" value="1"/>
</dbReference>
<dbReference type="PRINTS" id="PR00417">
    <property type="entry name" value="PRTPISMRASEI"/>
</dbReference>
<dbReference type="SMART" id="SM00437">
    <property type="entry name" value="TOP1Ac"/>
    <property type="match status" value="1"/>
</dbReference>
<dbReference type="SMART" id="SM00436">
    <property type="entry name" value="TOP1Bc"/>
    <property type="match status" value="1"/>
</dbReference>
<dbReference type="SMART" id="SM00493">
    <property type="entry name" value="TOPRIM"/>
    <property type="match status" value="1"/>
</dbReference>
<dbReference type="SUPFAM" id="SSF56712">
    <property type="entry name" value="Prokaryotic type I DNA topoisomerase"/>
    <property type="match status" value="1"/>
</dbReference>
<dbReference type="PROSITE" id="PS00396">
    <property type="entry name" value="TOPO_IA_1"/>
    <property type="match status" value="1"/>
</dbReference>
<dbReference type="PROSITE" id="PS52039">
    <property type="entry name" value="TOPO_IA_2"/>
    <property type="match status" value="1"/>
</dbReference>
<dbReference type="PROSITE" id="PS50880">
    <property type="entry name" value="TOPRIM"/>
    <property type="match status" value="1"/>
</dbReference>
<proteinExistence type="inferred from homology"/>
<name>TOP3_BACAN</name>
<evidence type="ECO:0000255" key="1">
    <source>
        <dbReference type="HAMAP-Rule" id="MF_00953"/>
    </source>
</evidence>
<evidence type="ECO:0000255" key="2">
    <source>
        <dbReference type="PROSITE-ProRule" id="PRU01383"/>
    </source>
</evidence>
<evidence type="ECO:0000256" key="3">
    <source>
        <dbReference type="SAM" id="MobiDB-lite"/>
    </source>
</evidence>
<protein>
    <recommendedName>
        <fullName evidence="1">DNA topoisomerase 3</fullName>
        <ecNumber evidence="1">5.6.2.1</ecNumber>
    </recommendedName>
    <alternativeName>
        <fullName evidence="1">DNA topoisomerase III</fullName>
    </alternativeName>
</protein>
<comment type="function">
    <text evidence="1">Releases the supercoiling and torsional tension of DNA, which is introduced during the DNA replication and transcription, by transiently cleaving and rejoining one strand of the DNA duplex. Introduces a single-strand break via transesterification at a target site in duplex DNA. The scissile phosphodiester is attacked by the catalytic tyrosine of the enzyme, resulting in the formation of a DNA-(5'-phosphotyrosyl)-enzyme intermediate and the expulsion of a 3'-OH DNA strand. The free DNA strand then undergoes passage around the unbroken strand, thus removing DNA supercoils. Finally, in the religation step, the DNA 3'-OH attacks the covalent intermediate to expel the active-site tyrosine and restore the DNA phosphodiester backbone.</text>
</comment>
<comment type="catalytic activity">
    <reaction evidence="1">
        <text>ATP-independent breakage of single-stranded DNA, followed by passage and rejoining.</text>
        <dbReference type="EC" id="5.6.2.1"/>
    </reaction>
</comment>
<comment type="cofactor">
    <cofactor evidence="1">
        <name>Mg(2+)</name>
        <dbReference type="ChEBI" id="CHEBI:18420"/>
    </cofactor>
</comment>
<comment type="similarity">
    <text evidence="1 2">Belongs to the type IA topoisomerase family.</text>
</comment>
<gene>
    <name evidence="1" type="primary">topB</name>
    <name type="ordered locus">BA_0375</name>
    <name type="ordered locus">GBAA_0375</name>
    <name type="ordered locus">BAS0361</name>
</gene>
<organism>
    <name type="scientific">Bacillus anthracis</name>
    <dbReference type="NCBI Taxonomy" id="1392"/>
    <lineage>
        <taxon>Bacteria</taxon>
        <taxon>Bacillati</taxon>
        <taxon>Bacillota</taxon>
        <taxon>Bacilli</taxon>
        <taxon>Bacillales</taxon>
        <taxon>Bacillaceae</taxon>
        <taxon>Bacillus</taxon>
        <taxon>Bacillus cereus group</taxon>
    </lineage>
</organism>
<reference key="1">
    <citation type="journal article" date="2003" name="Nature">
        <title>The genome sequence of Bacillus anthracis Ames and comparison to closely related bacteria.</title>
        <authorList>
            <person name="Read T.D."/>
            <person name="Peterson S.N."/>
            <person name="Tourasse N.J."/>
            <person name="Baillie L.W."/>
            <person name="Paulsen I.T."/>
            <person name="Nelson K.E."/>
            <person name="Tettelin H."/>
            <person name="Fouts D.E."/>
            <person name="Eisen J.A."/>
            <person name="Gill S.R."/>
            <person name="Holtzapple E.K."/>
            <person name="Okstad O.A."/>
            <person name="Helgason E."/>
            <person name="Rilstone J."/>
            <person name="Wu M."/>
            <person name="Kolonay J.F."/>
            <person name="Beanan M.J."/>
            <person name="Dodson R.J."/>
            <person name="Brinkac L.M."/>
            <person name="Gwinn M.L."/>
            <person name="DeBoy R.T."/>
            <person name="Madpu R."/>
            <person name="Daugherty S.C."/>
            <person name="Durkin A.S."/>
            <person name="Haft D.H."/>
            <person name="Nelson W.C."/>
            <person name="Peterson J.D."/>
            <person name="Pop M."/>
            <person name="Khouri H.M."/>
            <person name="Radune D."/>
            <person name="Benton J.L."/>
            <person name="Mahamoud Y."/>
            <person name="Jiang L."/>
            <person name="Hance I.R."/>
            <person name="Weidman J.F."/>
            <person name="Berry K.J."/>
            <person name="Plaut R.D."/>
            <person name="Wolf A.M."/>
            <person name="Watkins K.L."/>
            <person name="Nierman W.C."/>
            <person name="Hazen A."/>
            <person name="Cline R.T."/>
            <person name="Redmond C."/>
            <person name="Thwaite J.E."/>
            <person name="White O."/>
            <person name="Salzberg S.L."/>
            <person name="Thomason B."/>
            <person name="Friedlander A.M."/>
            <person name="Koehler T.M."/>
            <person name="Hanna P.C."/>
            <person name="Kolstoe A.-B."/>
            <person name="Fraser C.M."/>
        </authorList>
    </citation>
    <scope>NUCLEOTIDE SEQUENCE [LARGE SCALE GENOMIC DNA]</scope>
    <source>
        <strain>Ames / isolate Porton</strain>
    </source>
</reference>
<reference key="2">
    <citation type="journal article" date="2009" name="J. Bacteriol.">
        <title>The complete genome sequence of Bacillus anthracis Ames 'Ancestor'.</title>
        <authorList>
            <person name="Ravel J."/>
            <person name="Jiang L."/>
            <person name="Stanley S.T."/>
            <person name="Wilson M.R."/>
            <person name="Decker R.S."/>
            <person name="Read T.D."/>
            <person name="Worsham P."/>
            <person name="Keim P.S."/>
            <person name="Salzberg S.L."/>
            <person name="Fraser-Liggett C.M."/>
            <person name="Rasko D.A."/>
        </authorList>
    </citation>
    <scope>NUCLEOTIDE SEQUENCE [LARGE SCALE GENOMIC DNA]</scope>
    <source>
        <strain>Ames ancestor</strain>
    </source>
</reference>
<reference key="3">
    <citation type="submission" date="2004-01" db="EMBL/GenBank/DDBJ databases">
        <title>Complete genome sequence of Bacillus anthracis Sterne.</title>
        <authorList>
            <person name="Brettin T.S."/>
            <person name="Bruce D."/>
            <person name="Challacombe J.F."/>
            <person name="Gilna P."/>
            <person name="Han C."/>
            <person name="Hill K."/>
            <person name="Hitchcock P."/>
            <person name="Jackson P."/>
            <person name="Keim P."/>
            <person name="Longmire J."/>
            <person name="Lucas S."/>
            <person name="Okinaka R."/>
            <person name="Richardson P."/>
            <person name="Rubin E."/>
            <person name="Tice H."/>
        </authorList>
    </citation>
    <scope>NUCLEOTIDE SEQUENCE [LARGE SCALE GENOMIC DNA]</scope>
    <source>
        <strain>Sterne</strain>
    </source>
</reference>
<accession>Q81Z97</accession>
<accession>Q6I439</accession>
<accession>Q6KXU9</accession>
<sequence>MAKSVVIAEKPSVARDIARVLKCDKKGNGYLEGSKYIVTWALGHLVTLADPESYDVKYKKWNLEDLPMLPERLKLTVIKQTGKQFNAVKSQLLRKDVNEIIVATDAGREGELVARWIIDKVRINKPIKRLWISSVTDKAIKDGFANLKPGKAYDNLYASAVARSEADWYIGLNATRALTTRFNAQLNCGRVQTPTVAMIANREDEIKNFKAQTYYGIEAQTTNQLKLTWQDANGNSRSFNKEKIDGIVKGLDKHNATVLEIDKKQKKSFSPGLYDLTELQRDANKKFGYSAKETLNIMQKLYEQHKVLTYPRTDSRYISSDIVGTLPERLKACGVGEYRPLAHKVLQKPIKANKSFVDDSKVSDHHAIIPTEGYVNFSAFTDKERKIYDLVVKRFLAVLFPAFEYEQLTLRTKVGNETFIARGKTILHAGWKEVYENRFEDDDVTDDVKEQLLPRIEKGDTLTVKLIMQTSGQTKAPARFNEATLLSAMENPTKYMDTQNKQLADTLKSTGGLGTVATRADIIDKLFNSFLIEKRGKDIHITSKGRQLLDLVPEELKSPTLTGEWEQKLEAIAKGKLKKEVFISEMKNYTKEIVSEIKSSDKKYKHDNISTKSCPDCGKPMLEVNGKKGKMLVCQDRECGHRKNVSRTTNARCPQCKKKLELRGEGAGQIFACKCGYREKLSTFQERRKKESGNKADKRDVQKYMKQQKKEEEPLNNPFAEALKKLKFD</sequence>
<keyword id="KW-0238">DNA-binding</keyword>
<keyword id="KW-0413">Isomerase</keyword>
<keyword id="KW-0460">Magnesium</keyword>
<keyword id="KW-0479">Metal-binding</keyword>
<keyword id="KW-1185">Reference proteome</keyword>
<keyword id="KW-0799">Topoisomerase</keyword>